<protein>
    <recommendedName>
        <fullName evidence="4">Presqualene diphosphate synthase</fullName>
        <shortName evidence="4">PSPP synthase</shortName>
        <shortName evidence="4">PSPPase</shortName>
        <ecNumber evidence="2">2.5.1.103</ecNumber>
    </recommendedName>
</protein>
<gene>
    <name evidence="5" type="primary">hpnD</name>
    <name evidence="7" type="ordered locus">ZMO0870</name>
</gene>
<sequence>MTSAMKKIQPEAFSEKSSDSQASVSGAKSSSFYIGMRVLPPAEREAMYAIYNFCRQVDDIADDLEGSQEERKQALDAWRHDINALYAGEPCGQAAFLKEPVARFHLRQEDFIAVIDGMAMDLKGPIVFPDEATLDLYCDRVASAVGRLSVYVFGMDPNIGESLAYHLGRALQLTNILRDIDEDAEIGRCYLPREPLEKAGIPLDIEKALADPRLDKVCRDLAWQAEGHYAASDHIIHNRPKGYLIAPRLMAAAYSALLRKMLAQGWKNPRKKVKHNKLALLWTLLRLKVTS</sequence>
<keyword id="KW-1185">Reference proteome</keyword>
<keyword id="KW-0808">Transferase</keyword>
<reference key="1">
    <citation type="journal article" date="1998" name="Biochim. Biophys. Acta">
        <title>Cloning of conserved genes from Zymomonas mobilis and Bradyrhizobium japonicum that function in the biosynthesis of hopanoid lipids.</title>
        <authorList>
            <person name="Perzl M."/>
            <person name="Reipen I.G."/>
            <person name="Schmitz S."/>
            <person name="Poralla K."/>
            <person name="Sahm H."/>
            <person name="Sprenger G.A."/>
            <person name="Kannenberg E.L."/>
        </authorList>
    </citation>
    <scope>NUCLEOTIDE SEQUENCE [GENOMIC DNA]</scope>
    <scope>PATHWAY</scope>
    <source>
        <strain>ATCC 31821 / ZM4 / CP4</strain>
    </source>
</reference>
<reference key="2">
    <citation type="submission" date="1999-11" db="EMBL/GenBank/DDBJ databases">
        <title>Sequence analysis of 43F4 fosmid clone of Zymomonas mobilis.</title>
        <authorList>
            <person name="Um H.W."/>
        </authorList>
    </citation>
    <scope>NUCLEOTIDE SEQUENCE [GENOMIC DNA]</scope>
    <source>
        <strain>ATCC 31821 / ZM4 / CP4</strain>
    </source>
</reference>
<reference key="3">
    <citation type="journal article" date="2005" name="Nat. Biotechnol.">
        <title>The genome sequence of the ethanologenic bacterium Zymomonas mobilis ZM4.</title>
        <authorList>
            <person name="Seo J.-S."/>
            <person name="Chong H."/>
            <person name="Park H.S."/>
            <person name="Yoon K.-O."/>
            <person name="Jung C."/>
            <person name="Kim J.J."/>
            <person name="Hong J.H."/>
            <person name="Kim H."/>
            <person name="Kim J.-H."/>
            <person name="Kil J.-I."/>
            <person name="Park C.J."/>
            <person name="Oh H.-M."/>
            <person name="Lee J.-S."/>
            <person name="Jin S.-J."/>
            <person name="Um H.-W."/>
            <person name="Lee H.-J."/>
            <person name="Oh S.-J."/>
            <person name="Kim J.Y."/>
            <person name="Kang H.L."/>
            <person name="Lee S.Y."/>
            <person name="Lee K.J."/>
            <person name="Kang H.S."/>
        </authorList>
    </citation>
    <scope>NUCLEOTIDE SEQUENCE [LARGE SCALE GENOMIC DNA]</scope>
    <source>
        <strain>ATCC 31821 / ZM4 / CP4</strain>
    </source>
</reference>
<reference key="4">
    <citation type="journal article" date="2015" name="ACS Cent. Sci.">
        <title>Biosynthesis of squalene from farnesyl diphosphate in bacteria: three steps catalyzed by three enzymes.</title>
        <authorList>
            <person name="Pan J.J."/>
            <person name="Solbiati J.O."/>
            <person name="Ramamoorthy G."/>
            <person name="Hillerich B.S."/>
            <person name="Seidel R.D."/>
            <person name="Cronan J.E."/>
            <person name="Almo S.C."/>
            <person name="Poulter C.D."/>
        </authorList>
    </citation>
    <scope>FUNCTION</scope>
    <scope>CATALYTIC ACTIVITY</scope>
    <scope>PATHWAY</scope>
    <source>
        <strain>ATCC 31821 / ZM4 / CP4</strain>
    </source>
</reference>
<name>HPND_ZYMMO</name>
<evidence type="ECO:0000256" key="1">
    <source>
        <dbReference type="SAM" id="MobiDB-lite"/>
    </source>
</evidence>
<evidence type="ECO:0000269" key="2">
    <source>
    </source>
</evidence>
<evidence type="ECO:0000269" key="3">
    <source>
    </source>
</evidence>
<evidence type="ECO:0000303" key="4">
    <source>
    </source>
</evidence>
<evidence type="ECO:0000303" key="5">
    <source>
    </source>
</evidence>
<evidence type="ECO:0000305" key="6"/>
<evidence type="ECO:0000312" key="7">
    <source>
        <dbReference type="EMBL" id="AAV89494.1"/>
    </source>
</evidence>
<proteinExistence type="evidence at protein level"/>
<accession>H2VFR7</accession>
<accession>O34288</accession>
<accession>Q5NP66</accession>
<feature type="chain" id="PRO_0000441694" description="Presqualene diphosphate synthase">
    <location>
        <begin position="1"/>
        <end position="291"/>
    </location>
</feature>
<feature type="region of interest" description="Disordered" evidence="1">
    <location>
        <begin position="1"/>
        <end position="23"/>
    </location>
</feature>
<organism>
    <name type="scientific">Zymomonas mobilis subsp. mobilis (strain ATCC 31821 / ZM4 / CP4)</name>
    <dbReference type="NCBI Taxonomy" id="264203"/>
    <lineage>
        <taxon>Bacteria</taxon>
        <taxon>Pseudomonadati</taxon>
        <taxon>Pseudomonadota</taxon>
        <taxon>Alphaproteobacteria</taxon>
        <taxon>Sphingomonadales</taxon>
        <taxon>Zymomonadaceae</taxon>
        <taxon>Zymomonas</taxon>
    </lineage>
</organism>
<dbReference type="EC" id="2.5.1.103" evidence="2"/>
<dbReference type="EMBL" id="AJ001401">
    <property type="protein sequence ID" value="CAA04733.1"/>
    <property type="molecule type" value="Genomic_DNA"/>
</dbReference>
<dbReference type="EMBL" id="AF203881">
    <property type="protein sequence ID" value="AAF12831.1"/>
    <property type="molecule type" value="Genomic_DNA"/>
</dbReference>
<dbReference type="EMBL" id="AE008692">
    <property type="protein sequence ID" value="AAV89494.1"/>
    <property type="molecule type" value="Genomic_DNA"/>
</dbReference>
<dbReference type="RefSeq" id="WP_011240736.1">
    <property type="nucleotide sequence ID" value="NZ_CP035711.1"/>
</dbReference>
<dbReference type="SMR" id="H2VFR7"/>
<dbReference type="STRING" id="264203.ZMO0870"/>
<dbReference type="GeneID" id="79903975"/>
<dbReference type="KEGG" id="zmo:ZMO0870"/>
<dbReference type="eggNOG" id="COG1562">
    <property type="taxonomic scope" value="Bacteria"/>
</dbReference>
<dbReference type="HOGENOM" id="CLU_037269_1_1_5"/>
<dbReference type="UniPathway" id="UPA00337"/>
<dbReference type="Proteomes" id="UP000001173">
    <property type="component" value="Chromosome"/>
</dbReference>
<dbReference type="GO" id="GO:0004311">
    <property type="term" value="F:geranylgeranyl diphosphate synthase activity"/>
    <property type="evidence" value="ECO:0007669"/>
    <property type="project" value="InterPro"/>
</dbReference>
<dbReference type="GO" id="GO:0051996">
    <property type="term" value="F:squalene synthase [NAD(P)H] activity"/>
    <property type="evidence" value="ECO:0007669"/>
    <property type="project" value="InterPro"/>
</dbReference>
<dbReference type="GO" id="GO:0016117">
    <property type="term" value="P:carotenoid biosynthetic process"/>
    <property type="evidence" value="ECO:0007669"/>
    <property type="project" value="InterPro"/>
</dbReference>
<dbReference type="CDD" id="cd00683">
    <property type="entry name" value="Trans_IPPS_HH"/>
    <property type="match status" value="1"/>
</dbReference>
<dbReference type="Gene3D" id="1.10.600.10">
    <property type="entry name" value="Farnesyl Diphosphate Synthase"/>
    <property type="match status" value="1"/>
</dbReference>
<dbReference type="InterPro" id="IPR008949">
    <property type="entry name" value="Isoprenoid_synthase_dom_sf"/>
</dbReference>
<dbReference type="InterPro" id="IPR017828">
    <property type="entry name" value="SQ_synth_HpnD-like"/>
</dbReference>
<dbReference type="InterPro" id="IPR002060">
    <property type="entry name" value="Squ/phyt_synthse"/>
</dbReference>
<dbReference type="InterPro" id="IPR019845">
    <property type="entry name" value="Squalene/phytoene_synthase_CS"/>
</dbReference>
<dbReference type="InterPro" id="IPR044843">
    <property type="entry name" value="Trans_IPPS_bact-type"/>
</dbReference>
<dbReference type="InterPro" id="IPR033904">
    <property type="entry name" value="Trans_IPPS_HH"/>
</dbReference>
<dbReference type="NCBIfam" id="TIGR03465">
    <property type="entry name" value="HpnD"/>
    <property type="match status" value="1"/>
</dbReference>
<dbReference type="PANTHER" id="PTHR31480">
    <property type="entry name" value="BIFUNCTIONAL LYCOPENE CYCLASE/PHYTOENE SYNTHASE"/>
    <property type="match status" value="1"/>
</dbReference>
<dbReference type="Pfam" id="PF00494">
    <property type="entry name" value="SQS_PSY"/>
    <property type="match status" value="1"/>
</dbReference>
<dbReference type="SFLD" id="SFLDS00005">
    <property type="entry name" value="Isoprenoid_Synthase_Type_I"/>
    <property type="match status" value="1"/>
</dbReference>
<dbReference type="SFLD" id="SFLDG01212">
    <property type="entry name" value="Phytoene_synthase_like"/>
    <property type="match status" value="1"/>
</dbReference>
<dbReference type="SUPFAM" id="SSF48576">
    <property type="entry name" value="Terpenoid synthases"/>
    <property type="match status" value="1"/>
</dbReference>
<dbReference type="PROSITE" id="PS01044">
    <property type="entry name" value="SQUALEN_PHYTOEN_SYN_1"/>
    <property type="match status" value="1"/>
</dbReference>
<dbReference type="PROSITE" id="PS01045">
    <property type="entry name" value="SQUALEN_PHYTOEN_SYN_2"/>
    <property type="match status" value="1"/>
</dbReference>
<comment type="function">
    <text evidence="2">Involved in the biosynthesis of the hopanoid precursor squalene (SQ) from farnesyl diphosphate (FPP). Catalyzes the first step, the formation of presqualene diphosphate (PSPP) from two molecules of FPP.</text>
</comment>
<comment type="catalytic activity">
    <reaction evidence="2">
        <text>2 (2E,6E)-farnesyl diphosphate = presqualene diphosphate + diphosphate</text>
        <dbReference type="Rhea" id="RHEA:22672"/>
        <dbReference type="ChEBI" id="CHEBI:33019"/>
        <dbReference type="ChEBI" id="CHEBI:57310"/>
        <dbReference type="ChEBI" id="CHEBI:175763"/>
        <dbReference type="EC" id="2.5.1.103"/>
    </reaction>
</comment>
<comment type="pathway">
    <text evidence="2 3">Secondary metabolite biosynthesis; hopanoid biosynthesis.</text>
</comment>
<comment type="similarity">
    <text evidence="6">Belongs to the phytoene/squalene synthase family. HpnD subfamily.</text>
</comment>